<comment type="tissue specificity">
    <text evidence="3 4">Expressed specifically in the rostral-most somites at 24 hpf. At 48 hpf, expression continues in the rostral-most somites and also in the notochord. Somite expression was restricted to the vicinity of the horizontal myoseptum. In adults, expressed in the heart.</text>
</comment>
<comment type="induction">
    <text evidence="3 4">By heat shock in the somites.</text>
</comment>
<comment type="similarity">
    <text evidence="1">Belongs to the small heat shock protein (HSP20) family.</text>
</comment>
<accession>A5JV83</accession>
<accession>B3DHE3</accession>
<evidence type="ECO:0000255" key="1">
    <source>
        <dbReference type="PROSITE-ProRule" id="PRU00285"/>
    </source>
</evidence>
<evidence type="ECO:0000256" key="2">
    <source>
        <dbReference type="SAM" id="MobiDB-lite"/>
    </source>
</evidence>
<evidence type="ECO:0000269" key="3">
    <source>
    </source>
</evidence>
<evidence type="ECO:0000269" key="4">
    <source>
    </source>
</evidence>
<evidence type="ECO:0000305" key="5"/>
<feature type="chain" id="PRO_0000300628" description="Heat shock protein beta-11">
    <location>
        <begin position="1"/>
        <end position="205"/>
    </location>
</feature>
<feature type="domain" description="sHSP" evidence="1">
    <location>
        <begin position="67"/>
        <end position="180"/>
    </location>
</feature>
<feature type="region of interest" description="Disordered" evidence="2">
    <location>
        <begin position="184"/>
        <end position="205"/>
    </location>
</feature>
<feature type="compositionally biased region" description="Low complexity" evidence="2">
    <location>
        <begin position="192"/>
        <end position="205"/>
    </location>
</feature>
<feature type="sequence conflict" description="In Ref. 1; ABQ57501." evidence="5" ref="1">
    <original>D</original>
    <variation>G</variation>
    <location>
        <position position="143"/>
    </location>
</feature>
<protein>
    <recommendedName>
        <fullName>Heat shock protein beta-11</fullName>
    </recommendedName>
</protein>
<dbReference type="EMBL" id="EF583631">
    <property type="protein sequence ID" value="ABQ57501.1"/>
    <property type="molecule type" value="mRNA"/>
</dbReference>
<dbReference type="EMBL" id="BC162734">
    <property type="protein sequence ID" value="AAI62734.1"/>
    <property type="molecule type" value="mRNA"/>
</dbReference>
<dbReference type="EMBL" id="BC162749">
    <property type="protein sequence ID" value="AAI62749.1"/>
    <property type="molecule type" value="mRNA"/>
</dbReference>
<dbReference type="RefSeq" id="NP_001092897.1">
    <property type="nucleotide sequence ID" value="NM_001099427.1"/>
</dbReference>
<dbReference type="SMR" id="A5JV83"/>
<dbReference type="STRING" id="7955.ENSDARP00000026207"/>
<dbReference type="PaxDb" id="7955-ENSDARP00000026207"/>
<dbReference type="PeptideAtlas" id="A5JV83"/>
<dbReference type="GeneID" id="796767"/>
<dbReference type="KEGG" id="dre:796767"/>
<dbReference type="AGR" id="ZFIN:ZDB-GENE-030131-5148"/>
<dbReference type="CTD" id="796767"/>
<dbReference type="ZFIN" id="ZDB-GENE-030131-5148">
    <property type="gene designation" value="hspb9l"/>
</dbReference>
<dbReference type="eggNOG" id="KOG3591">
    <property type="taxonomic scope" value="Eukaryota"/>
</dbReference>
<dbReference type="InParanoid" id="A5JV83"/>
<dbReference type="OrthoDB" id="9942401at2759"/>
<dbReference type="PhylomeDB" id="A5JV83"/>
<dbReference type="TreeFam" id="TF105049"/>
<dbReference type="PRO" id="PR:A5JV83"/>
<dbReference type="Proteomes" id="UP000000437">
    <property type="component" value="Chromosome 21"/>
</dbReference>
<dbReference type="GO" id="GO:0005737">
    <property type="term" value="C:cytoplasm"/>
    <property type="evidence" value="ECO:0000318"/>
    <property type="project" value="GO_Central"/>
</dbReference>
<dbReference type="GO" id="GO:0005634">
    <property type="term" value="C:nucleus"/>
    <property type="evidence" value="ECO:0000318"/>
    <property type="project" value="GO_Central"/>
</dbReference>
<dbReference type="GO" id="GO:0051082">
    <property type="term" value="F:unfolded protein binding"/>
    <property type="evidence" value="ECO:0000318"/>
    <property type="project" value="GO_Central"/>
</dbReference>
<dbReference type="GO" id="GO:0031033">
    <property type="term" value="P:myosin filament organization"/>
    <property type="evidence" value="ECO:0000315"/>
    <property type="project" value="ZFIN"/>
</dbReference>
<dbReference type="GO" id="GO:0042026">
    <property type="term" value="P:protein refolding"/>
    <property type="evidence" value="ECO:0000318"/>
    <property type="project" value="GO_Central"/>
</dbReference>
<dbReference type="GO" id="GO:0009408">
    <property type="term" value="P:response to heat"/>
    <property type="evidence" value="ECO:0000318"/>
    <property type="project" value="GO_Central"/>
</dbReference>
<dbReference type="CDD" id="cd06481">
    <property type="entry name" value="ACD_HspB9_like"/>
    <property type="match status" value="1"/>
</dbReference>
<dbReference type="Gene3D" id="2.60.40.790">
    <property type="match status" value="1"/>
</dbReference>
<dbReference type="InterPro" id="IPR002068">
    <property type="entry name" value="A-crystallin/Hsp20_dom"/>
</dbReference>
<dbReference type="InterPro" id="IPR001436">
    <property type="entry name" value="Alpha-crystallin/sHSP_animal"/>
</dbReference>
<dbReference type="InterPro" id="IPR008978">
    <property type="entry name" value="HSP20-like_chaperone"/>
</dbReference>
<dbReference type="PANTHER" id="PTHR45640:SF2">
    <property type="entry name" value="HEAT SHOCK PROTEIN BETA-11-RELATED"/>
    <property type="match status" value="1"/>
</dbReference>
<dbReference type="PANTHER" id="PTHR45640">
    <property type="entry name" value="HEAT SHOCK PROTEIN HSP-12.2-RELATED"/>
    <property type="match status" value="1"/>
</dbReference>
<dbReference type="Pfam" id="PF00011">
    <property type="entry name" value="HSP20"/>
    <property type="match status" value="1"/>
</dbReference>
<dbReference type="SUPFAM" id="SSF49764">
    <property type="entry name" value="HSP20-like chaperones"/>
    <property type="match status" value="1"/>
</dbReference>
<dbReference type="PROSITE" id="PS01031">
    <property type="entry name" value="SHSP"/>
    <property type="match status" value="1"/>
</dbReference>
<reference key="1">
    <citation type="journal article" date="2007" name="Gene">
        <title>Genome-wide analysis and expression profiling of the small heat shock proteins in zebrafish.</title>
        <authorList>
            <person name="Elicker K.S."/>
            <person name="Hutson L.D."/>
        </authorList>
    </citation>
    <scope>NUCLEOTIDE SEQUENCE [MRNA]</scope>
    <scope>TISSUE SPECIFICITY</scope>
    <scope>INDUCTION</scope>
</reference>
<reference key="2">
    <citation type="submission" date="2008-04" db="EMBL/GenBank/DDBJ databases">
        <authorList>
            <consortium name="NIH - Zebrafish Gene Collection (ZGC) project"/>
        </authorList>
    </citation>
    <scope>NUCLEOTIDE SEQUENCE [LARGE SCALE MRNA]</scope>
</reference>
<reference key="3">
    <citation type="journal article" date="2008" name="Dev. Dyn.">
        <title>Developmental expression patterns of the zebrafish small heat shock proteins.</title>
        <authorList>
            <person name="Marvin M."/>
            <person name="O'Rourke D."/>
            <person name="Kurihara T."/>
            <person name="Juliano C.E."/>
            <person name="Harrison K.L."/>
            <person name="Hutson L.D."/>
        </authorList>
    </citation>
    <scope>TISSUE SPECIFICITY</scope>
    <scope>INDUCTION</scope>
</reference>
<sequence length="205" mass="23823">MLCPSTFQPHLSPFMDFHWPVRSLWPETRPLFFQFEQEMMRHMQEMRHNMEFMERLHQRIFDEIDHVSPMTTFKPISFQLGKEGSHYALTLDTQDFSPEELAVKQVGRKLRVSGKTEKKQDDGKGSYSYRCQEFRQEFDLPEDVNPESVSCSLNNGQLQIQAPREGNTVSNERVIPITYTPAVKNPALQNSEPENQAVEAEAAEN</sequence>
<proteinExistence type="evidence at transcript level"/>
<organism>
    <name type="scientific">Danio rerio</name>
    <name type="common">Zebrafish</name>
    <name type="synonym">Brachydanio rerio</name>
    <dbReference type="NCBI Taxonomy" id="7955"/>
    <lineage>
        <taxon>Eukaryota</taxon>
        <taxon>Metazoa</taxon>
        <taxon>Chordata</taxon>
        <taxon>Craniata</taxon>
        <taxon>Vertebrata</taxon>
        <taxon>Euteleostomi</taxon>
        <taxon>Actinopterygii</taxon>
        <taxon>Neopterygii</taxon>
        <taxon>Teleostei</taxon>
        <taxon>Ostariophysi</taxon>
        <taxon>Cypriniformes</taxon>
        <taxon>Danionidae</taxon>
        <taxon>Danioninae</taxon>
        <taxon>Danio</taxon>
    </lineage>
</organism>
<gene>
    <name type="primary">hspb11</name>
</gene>
<name>HSPBB_DANRE</name>
<keyword id="KW-1185">Reference proteome</keyword>
<keyword id="KW-0346">Stress response</keyword>